<accession>Q09YK8</accession>
<name>ST7_ATEGE</name>
<proteinExistence type="inferred from homology"/>
<comment type="subcellular location">
    <subcellularLocation>
        <location evidence="3">Membrane</location>
        <topology evidence="3">Multi-pass membrane protein</topology>
    </subcellularLocation>
</comment>
<comment type="similarity">
    <text evidence="3">Belongs to the ST7 family.</text>
</comment>
<feature type="chain" id="PRO_0000339191" description="Suppressor of tumorigenicity 7 protein">
    <location>
        <begin position="1"/>
        <end position="585"/>
    </location>
</feature>
<feature type="transmembrane region" description="Helical" evidence="2">
    <location>
        <begin position="15"/>
        <end position="35"/>
    </location>
</feature>
<feature type="transmembrane region" description="Helical" evidence="2">
    <location>
        <begin position="62"/>
        <end position="82"/>
    </location>
</feature>
<feature type="transmembrane region" description="Helical" evidence="2">
    <location>
        <begin position="512"/>
        <end position="532"/>
    </location>
</feature>
<feature type="modified residue" description="Phosphoserine" evidence="1">
    <location>
        <position position="386"/>
    </location>
</feature>
<feature type="glycosylation site" description="N-linked (GlcNAc...) asparagine" evidence="2">
    <location>
        <position position="47"/>
    </location>
</feature>
<evidence type="ECO:0000250" key="1">
    <source>
        <dbReference type="UniProtKB" id="Q9NRC1"/>
    </source>
</evidence>
<evidence type="ECO:0000255" key="2"/>
<evidence type="ECO:0000305" key="3"/>
<sequence length="585" mass="67152">MAEAGTGFLEQLKSCIVWSWTYLWTVWFFIVLFLVYILRVPLKINDNLSTVSMFLNTLTPKFYVALTGTSSLISGLILIFEWWYFRKYGTSFIEQVSVSHLRPLLGGVDNNSSNNSNSSNGDSDSNRQSVSECKVWRNPLNLFRGAEYNRYTWVTGREPLTYYDMNLSAQDHQTFFTCDSDHLRPADAIMQKAWRERNPQARISAAHEALEINEIRSRVEVPLIASSTIWEIKLLPKCATAYILLAEEEATTIAEAEKLFKQALKAGDGCYRRSQQLQHHGSQYEAQHRRDTNVLVYIKRRLAMCARRLGRTREAVKMMRDLMKEFPLLSMFNIHENLLEALLELQAYADVQAVLAKYDDISLPKSATICYTAALLKARAVSDKFSPEAASRRGLSTAEMNAVEAIHRAVEFNPHVPKYLLEMKSLILPPEHILKRGDSEAIAYAFFHLAHWKRVEGALNLLHCTWEGTFRMIPYPLEKGHLFYPYPICTETADRELLPSFHEVSVYPKKELPFFILFTAGLCSFTAMLALLTHQFPELMGVFAKAMIDIFCSAEFRDWNCKSIFMRVEDELEIPPAPQSQHFQN</sequence>
<protein>
    <recommendedName>
        <fullName>Suppressor of tumorigenicity 7 protein</fullName>
    </recommendedName>
</protein>
<organism>
    <name type="scientific">Ateles geoffroyi</name>
    <name type="common">Black-handed spider monkey</name>
    <name type="synonym">Geoffroy's spider monkey</name>
    <dbReference type="NCBI Taxonomy" id="9509"/>
    <lineage>
        <taxon>Eukaryota</taxon>
        <taxon>Metazoa</taxon>
        <taxon>Chordata</taxon>
        <taxon>Craniata</taxon>
        <taxon>Vertebrata</taxon>
        <taxon>Euteleostomi</taxon>
        <taxon>Mammalia</taxon>
        <taxon>Eutheria</taxon>
        <taxon>Euarchontoglires</taxon>
        <taxon>Primates</taxon>
        <taxon>Haplorrhini</taxon>
        <taxon>Platyrrhini</taxon>
        <taxon>Atelidae</taxon>
        <taxon>Atelinae</taxon>
        <taxon>Ateles</taxon>
    </lineage>
</organism>
<reference key="1">
    <citation type="submission" date="2006-09" db="EMBL/GenBank/DDBJ databases">
        <title>NISC comparative sequencing initiative.</title>
        <authorList>
            <person name="Antonellis A."/>
            <person name="Ayele K."/>
            <person name="Benjamin B."/>
            <person name="Blakesley R.W."/>
            <person name="Boakye A."/>
            <person name="Bouffard G.G."/>
            <person name="Brinkley C."/>
            <person name="Brooks S."/>
            <person name="Chu G."/>
            <person name="Coleman H."/>
            <person name="Engle J."/>
            <person name="Gestole M."/>
            <person name="Greene A."/>
            <person name="Guan X."/>
            <person name="Gupta J."/>
            <person name="Haghighi P."/>
            <person name="Han J."/>
            <person name="Hansen N."/>
            <person name="Ho S.-L."/>
            <person name="Hu P."/>
            <person name="Hunter G."/>
            <person name="Hurle B."/>
            <person name="Idol J.R."/>
            <person name="Kwong P."/>
            <person name="Laric P."/>
            <person name="Larson S."/>
            <person name="Lee-Lin S.-Q."/>
            <person name="Legaspi R."/>
            <person name="Madden M."/>
            <person name="Maduro Q.L."/>
            <person name="Maduro V.B."/>
            <person name="Margulies E.H."/>
            <person name="Masiello C."/>
            <person name="Maskeri B."/>
            <person name="McDowell J."/>
            <person name="Mojidi H.A."/>
            <person name="Mullikin J.C."/>
            <person name="Oestreicher J.S."/>
            <person name="Park M."/>
            <person name="Portnoy M.E."/>
            <person name="Prasad A."/>
            <person name="Puri O."/>
            <person name="Reddix-Dugue N."/>
            <person name="Schandler K."/>
            <person name="Schueler M.G."/>
            <person name="Sison C."/>
            <person name="Stantripop S."/>
            <person name="Stephen E."/>
            <person name="Taye A."/>
            <person name="Thomas J.W."/>
            <person name="Thomas P.J."/>
            <person name="Tsipouri V."/>
            <person name="Ung L."/>
            <person name="Vogt J.L."/>
            <person name="Wetherby K.D."/>
            <person name="Young A."/>
            <person name="Green E.D."/>
        </authorList>
    </citation>
    <scope>NUCLEOTIDE SEQUENCE [LARGE SCALE GENOMIC DNA]</scope>
</reference>
<gene>
    <name type="primary">ST7</name>
</gene>
<keyword id="KW-0325">Glycoprotein</keyword>
<keyword id="KW-0472">Membrane</keyword>
<keyword id="KW-0597">Phosphoprotein</keyword>
<keyword id="KW-0812">Transmembrane</keyword>
<keyword id="KW-1133">Transmembrane helix</keyword>
<dbReference type="EMBL" id="DP000177">
    <property type="protein sequence ID" value="ABI75272.1"/>
    <property type="molecule type" value="Genomic_DNA"/>
</dbReference>
<dbReference type="GlyCosmos" id="Q09YK8">
    <property type="glycosylation" value="1 site, No reported glycans"/>
</dbReference>
<dbReference type="GO" id="GO:0016020">
    <property type="term" value="C:membrane"/>
    <property type="evidence" value="ECO:0007669"/>
    <property type="project" value="UniProtKB-SubCell"/>
</dbReference>
<dbReference type="CDD" id="cd11557">
    <property type="entry name" value="ST7"/>
    <property type="match status" value="1"/>
</dbReference>
<dbReference type="InterPro" id="IPR007311">
    <property type="entry name" value="ST7"/>
</dbReference>
<dbReference type="PANTHER" id="PTHR12745">
    <property type="entry name" value="SUPPRESSION OF TUMORIGENICITY 7"/>
    <property type="match status" value="1"/>
</dbReference>
<dbReference type="PANTHER" id="PTHR12745:SF10">
    <property type="entry name" value="SUPPRESSOR OF TUMORIGENICITY 7 PROTEIN"/>
    <property type="match status" value="1"/>
</dbReference>
<dbReference type="Pfam" id="PF04184">
    <property type="entry name" value="ST7"/>
    <property type="match status" value="1"/>
</dbReference>